<proteinExistence type="inferred from homology"/>
<protein>
    <recommendedName>
        <fullName evidence="1">Protein GrpE</fullName>
    </recommendedName>
    <alternativeName>
        <fullName evidence="1">HSP-70 cofactor</fullName>
    </alternativeName>
</protein>
<comment type="function">
    <text evidence="1">Participates actively in the response to hyperosmotic and heat shock by preventing the aggregation of stress-denatured proteins, in association with DnaK and GrpE. It is the nucleotide exchange factor for DnaK and may function as a thermosensor. Unfolded proteins bind initially to DnaJ; upon interaction with the DnaJ-bound protein, DnaK hydrolyzes its bound ATP, resulting in the formation of a stable complex. GrpE releases ADP from DnaK; ATP binding to DnaK triggers the release of the substrate protein, thus completing the reaction cycle. Several rounds of ATP-dependent interactions between DnaJ, DnaK and GrpE are required for fully efficient folding.</text>
</comment>
<comment type="subunit">
    <text evidence="1">Homodimer.</text>
</comment>
<comment type="subcellular location">
    <subcellularLocation>
        <location evidence="1">Cytoplasm</location>
    </subcellularLocation>
</comment>
<comment type="similarity">
    <text evidence="1">Belongs to the GrpE family.</text>
</comment>
<dbReference type="EMBL" id="CP000675">
    <property type="protein sequence ID" value="ABQ55459.1"/>
    <property type="molecule type" value="Genomic_DNA"/>
</dbReference>
<dbReference type="RefSeq" id="WP_011946926.1">
    <property type="nucleotide sequence ID" value="NZ_JAPMSS010000011.1"/>
</dbReference>
<dbReference type="SMR" id="A5IDK9"/>
<dbReference type="KEGG" id="lpc:LPC_1510"/>
<dbReference type="HOGENOM" id="CLU_057217_6_0_6"/>
<dbReference type="GO" id="GO:0005829">
    <property type="term" value="C:cytosol"/>
    <property type="evidence" value="ECO:0007669"/>
    <property type="project" value="TreeGrafter"/>
</dbReference>
<dbReference type="GO" id="GO:0000774">
    <property type="term" value="F:adenyl-nucleotide exchange factor activity"/>
    <property type="evidence" value="ECO:0007669"/>
    <property type="project" value="InterPro"/>
</dbReference>
<dbReference type="GO" id="GO:0042803">
    <property type="term" value="F:protein homodimerization activity"/>
    <property type="evidence" value="ECO:0007669"/>
    <property type="project" value="InterPro"/>
</dbReference>
<dbReference type="GO" id="GO:0051087">
    <property type="term" value="F:protein-folding chaperone binding"/>
    <property type="evidence" value="ECO:0007669"/>
    <property type="project" value="InterPro"/>
</dbReference>
<dbReference type="GO" id="GO:0051082">
    <property type="term" value="F:unfolded protein binding"/>
    <property type="evidence" value="ECO:0007669"/>
    <property type="project" value="TreeGrafter"/>
</dbReference>
<dbReference type="GO" id="GO:0006457">
    <property type="term" value="P:protein folding"/>
    <property type="evidence" value="ECO:0007669"/>
    <property type="project" value="InterPro"/>
</dbReference>
<dbReference type="CDD" id="cd00446">
    <property type="entry name" value="GrpE"/>
    <property type="match status" value="1"/>
</dbReference>
<dbReference type="FunFam" id="2.30.22.10:FF:000001">
    <property type="entry name" value="Protein GrpE"/>
    <property type="match status" value="1"/>
</dbReference>
<dbReference type="Gene3D" id="3.90.20.20">
    <property type="match status" value="1"/>
</dbReference>
<dbReference type="Gene3D" id="2.30.22.10">
    <property type="entry name" value="Head domain of nucleotide exchange factor GrpE"/>
    <property type="match status" value="1"/>
</dbReference>
<dbReference type="HAMAP" id="MF_01151">
    <property type="entry name" value="GrpE"/>
    <property type="match status" value="1"/>
</dbReference>
<dbReference type="InterPro" id="IPR000740">
    <property type="entry name" value="GrpE"/>
</dbReference>
<dbReference type="InterPro" id="IPR013805">
    <property type="entry name" value="GrpE_coiled_coil"/>
</dbReference>
<dbReference type="InterPro" id="IPR009012">
    <property type="entry name" value="GrpE_head"/>
</dbReference>
<dbReference type="NCBIfam" id="NF010737">
    <property type="entry name" value="PRK14139.1"/>
    <property type="match status" value="1"/>
</dbReference>
<dbReference type="NCBIfam" id="NF010738">
    <property type="entry name" value="PRK14140.1"/>
    <property type="match status" value="1"/>
</dbReference>
<dbReference type="NCBIfam" id="NF010742">
    <property type="entry name" value="PRK14144.1"/>
    <property type="match status" value="1"/>
</dbReference>
<dbReference type="NCBIfam" id="NF010748">
    <property type="entry name" value="PRK14150.1"/>
    <property type="match status" value="1"/>
</dbReference>
<dbReference type="PANTHER" id="PTHR21237">
    <property type="entry name" value="GRPE PROTEIN"/>
    <property type="match status" value="1"/>
</dbReference>
<dbReference type="PANTHER" id="PTHR21237:SF23">
    <property type="entry name" value="GRPE PROTEIN HOMOLOG, MITOCHONDRIAL"/>
    <property type="match status" value="1"/>
</dbReference>
<dbReference type="Pfam" id="PF01025">
    <property type="entry name" value="GrpE"/>
    <property type="match status" value="1"/>
</dbReference>
<dbReference type="PRINTS" id="PR00773">
    <property type="entry name" value="GRPEPROTEIN"/>
</dbReference>
<dbReference type="SUPFAM" id="SSF58014">
    <property type="entry name" value="Coiled-coil domain of nucleotide exchange factor GrpE"/>
    <property type="match status" value="1"/>
</dbReference>
<dbReference type="SUPFAM" id="SSF51064">
    <property type="entry name" value="Head domain of nucleotide exchange factor GrpE"/>
    <property type="match status" value="1"/>
</dbReference>
<dbReference type="PROSITE" id="PS01071">
    <property type="entry name" value="GRPE"/>
    <property type="match status" value="1"/>
</dbReference>
<keyword id="KW-0143">Chaperone</keyword>
<keyword id="KW-0963">Cytoplasm</keyword>
<keyword id="KW-0346">Stress response</keyword>
<reference key="1">
    <citation type="submission" date="2006-11" db="EMBL/GenBank/DDBJ databases">
        <title>Identification and characterization of a new conjugation/ type IVA secretion system (trb/tra) of L. pneumophila Corby localized on a mobile genomic island.</title>
        <authorList>
            <person name="Gloeckner G."/>
            <person name="Albert-Weissenberger C."/>
            <person name="Weinmann E."/>
            <person name="Jacobi S."/>
            <person name="Schunder E."/>
            <person name="Steinert M."/>
            <person name="Buchrieser C."/>
            <person name="Hacker J."/>
            <person name="Heuner K."/>
        </authorList>
    </citation>
    <scope>NUCLEOTIDE SEQUENCE [LARGE SCALE GENOMIC DNA]</scope>
    <source>
        <strain>Corby</strain>
    </source>
</reference>
<name>GRPE_LEGPC</name>
<sequence length="199" mass="22830">MSKQNKKDWKKFKDEHKEEYKVENEILEEETDEESQHQEPALGHPSYTALEEQLTLAEQKAHENWEKSVRALAELENVRRRMEREVANAHKYGVEKLISALLPVVDSLEQALQLADKNSDPSMHEGLELTMKLFLDALQKFDVEQIDPLGQTFDPQQHEAMSMQPAPGAPPNSVITVFQKGYKLSDRVIRPARVIVSTK</sequence>
<feature type="chain" id="PRO_1000053596" description="Protein GrpE">
    <location>
        <begin position="1"/>
        <end position="199"/>
    </location>
</feature>
<feature type="region of interest" description="Disordered" evidence="2">
    <location>
        <begin position="20"/>
        <end position="52"/>
    </location>
</feature>
<organism>
    <name type="scientific">Legionella pneumophila (strain Corby)</name>
    <dbReference type="NCBI Taxonomy" id="400673"/>
    <lineage>
        <taxon>Bacteria</taxon>
        <taxon>Pseudomonadati</taxon>
        <taxon>Pseudomonadota</taxon>
        <taxon>Gammaproteobacteria</taxon>
        <taxon>Legionellales</taxon>
        <taxon>Legionellaceae</taxon>
        <taxon>Legionella</taxon>
    </lineage>
</organism>
<accession>A5IDK9</accession>
<evidence type="ECO:0000255" key="1">
    <source>
        <dbReference type="HAMAP-Rule" id="MF_01151"/>
    </source>
</evidence>
<evidence type="ECO:0000256" key="2">
    <source>
        <dbReference type="SAM" id="MobiDB-lite"/>
    </source>
</evidence>
<gene>
    <name evidence="1" type="primary">grpE</name>
    <name type="ordered locus">LPC_1510</name>
</gene>